<reference key="1">
    <citation type="journal article" date="2001" name="Science">
        <title>Mechanisms of evolution in Rickettsia conorii and R. prowazekii.</title>
        <authorList>
            <person name="Ogata H."/>
            <person name="Audic S."/>
            <person name="Renesto-Audiffren P."/>
            <person name="Fournier P.-E."/>
            <person name="Barbe V."/>
            <person name="Samson D."/>
            <person name="Roux V."/>
            <person name="Cossart P."/>
            <person name="Weissenbach J."/>
            <person name="Claverie J.-M."/>
            <person name="Raoult D."/>
        </authorList>
    </citation>
    <scope>NUCLEOTIDE SEQUENCE [LARGE SCALE GENOMIC DNA]</scope>
    <source>
        <strain>ATCC VR-613 / Malish 7</strain>
    </source>
</reference>
<protein>
    <recommendedName>
        <fullName evidence="1">Large ribosomal subunit protein uL24</fullName>
    </recommendedName>
    <alternativeName>
        <fullName evidence="2">50S ribosomal protein L24</fullName>
    </alternativeName>
</protein>
<feature type="chain" id="PRO_0000130705" description="Large ribosomal subunit protein uL24">
    <location>
        <begin position="1"/>
        <end position="109"/>
    </location>
</feature>
<name>RL24_RICCN</name>
<comment type="function">
    <text evidence="1">One of two assembly initiator proteins, it binds directly to the 5'-end of the 23S rRNA, where it nucleates assembly of the 50S subunit.</text>
</comment>
<comment type="function">
    <text evidence="1">One of the proteins that surrounds the polypeptide exit tunnel on the outside of the subunit.</text>
</comment>
<comment type="subunit">
    <text evidence="1">Part of the 50S ribosomal subunit.</text>
</comment>
<comment type="similarity">
    <text evidence="1">Belongs to the universal ribosomal protein uL24 family.</text>
</comment>
<gene>
    <name evidence="1" type="primary">rplX</name>
    <name type="ordered locus">RC0995</name>
</gene>
<evidence type="ECO:0000255" key="1">
    <source>
        <dbReference type="HAMAP-Rule" id="MF_01326"/>
    </source>
</evidence>
<evidence type="ECO:0000305" key="2"/>
<accession>Q92GX7</accession>
<dbReference type="EMBL" id="AE006914">
    <property type="protein sequence ID" value="AAL03533.1"/>
    <property type="molecule type" value="Genomic_DNA"/>
</dbReference>
<dbReference type="PIR" id="C97824">
    <property type="entry name" value="C97824"/>
</dbReference>
<dbReference type="RefSeq" id="WP_004997814.1">
    <property type="nucleotide sequence ID" value="NC_003103.1"/>
</dbReference>
<dbReference type="SMR" id="Q92GX7"/>
<dbReference type="GeneID" id="95361475"/>
<dbReference type="KEGG" id="rco:RC0995"/>
<dbReference type="HOGENOM" id="CLU_093315_2_0_5"/>
<dbReference type="Proteomes" id="UP000000816">
    <property type="component" value="Chromosome"/>
</dbReference>
<dbReference type="GO" id="GO:1990904">
    <property type="term" value="C:ribonucleoprotein complex"/>
    <property type="evidence" value="ECO:0007669"/>
    <property type="project" value="UniProtKB-KW"/>
</dbReference>
<dbReference type="GO" id="GO:0005840">
    <property type="term" value="C:ribosome"/>
    <property type="evidence" value="ECO:0007669"/>
    <property type="project" value="UniProtKB-KW"/>
</dbReference>
<dbReference type="GO" id="GO:0019843">
    <property type="term" value="F:rRNA binding"/>
    <property type="evidence" value="ECO:0007669"/>
    <property type="project" value="UniProtKB-UniRule"/>
</dbReference>
<dbReference type="GO" id="GO:0003735">
    <property type="term" value="F:structural constituent of ribosome"/>
    <property type="evidence" value="ECO:0007669"/>
    <property type="project" value="InterPro"/>
</dbReference>
<dbReference type="GO" id="GO:0006412">
    <property type="term" value="P:translation"/>
    <property type="evidence" value="ECO:0007669"/>
    <property type="project" value="UniProtKB-UniRule"/>
</dbReference>
<dbReference type="CDD" id="cd06089">
    <property type="entry name" value="KOW_RPL26"/>
    <property type="match status" value="1"/>
</dbReference>
<dbReference type="FunFam" id="2.30.30.30:FF:000004">
    <property type="entry name" value="50S ribosomal protein L24"/>
    <property type="match status" value="1"/>
</dbReference>
<dbReference type="Gene3D" id="2.30.30.30">
    <property type="match status" value="1"/>
</dbReference>
<dbReference type="HAMAP" id="MF_01326_B">
    <property type="entry name" value="Ribosomal_uL24_B"/>
    <property type="match status" value="1"/>
</dbReference>
<dbReference type="InterPro" id="IPR005824">
    <property type="entry name" value="KOW"/>
</dbReference>
<dbReference type="InterPro" id="IPR014722">
    <property type="entry name" value="Rib_uL2_dom2"/>
</dbReference>
<dbReference type="InterPro" id="IPR003256">
    <property type="entry name" value="Ribosomal_uL24"/>
</dbReference>
<dbReference type="InterPro" id="IPR005825">
    <property type="entry name" value="Ribosomal_uL24_CS"/>
</dbReference>
<dbReference type="InterPro" id="IPR041988">
    <property type="entry name" value="Ribosomal_uL24_KOW"/>
</dbReference>
<dbReference type="InterPro" id="IPR008991">
    <property type="entry name" value="Translation_prot_SH3-like_sf"/>
</dbReference>
<dbReference type="NCBIfam" id="TIGR01079">
    <property type="entry name" value="rplX_bact"/>
    <property type="match status" value="1"/>
</dbReference>
<dbReference type="PANTHER" id="PTHR12903">
    <property type="entry name" value="MITOCHONDRIAL RIBOSOMAL PROTEIN L24"/>
    <property type="match status" value="1"/>
</dbReference>
<dbReference type="Pfam" id="PF00467">
    <property type="entry name" value="KOW"/>
    <property type="match status" value="1"/>
</dbReference>
<dbReference type="Pfam" id="PF17136">
    <property type="entry name" value="ribosomal_L24"/>
    <property type="match status" value="1"/>
</dbReference>
<dbReference type="SMART" id="SM00739">
    <property type="entry name" value="KOW"/>
    <property type="match status" value="1"/>
</dbReference>
<dbReference type="SUPFAM" id="SSF50104">
    <property type="entry name" value="Translation proteins SH3-like domain"/>
    <property type="match status" value="1"/>
</dbReference>
<dbReference type="PROSITE" id="PS01108">
    <property type="entry name" value="RIBOSOMAL_L24"/>
    <property type="match status" value="1"/>
</dbReference>
<keyword id="KW-0687">Ribonucleoprotein</keyword>
<keyword id="KW-0689">Ribosomal protein</keyword>
<keyword id="KW-0694">RNA-binding</keyword>
<keyword id="KW-0699">rRNA-binding</keyword>
<sequence length="109" mass="11824">MIKLKVKKGDEVVVITGKHKGKKGKILKVFPEDSKVIVSGVNVVKKHTKSNQMSEGGIITKELPIHISNIAHIDPKTGNPTKVAFKFLEDGSKVRVAKKSGEIIGKEGK</sequence>
<organism>
    <name type="scientific">Rickettsia conorii (strain ATCC VR-613 / Malish 7)</name>
    <dbReference type="NCBI Taxonomy" id="272944"/>
    <lineage>
        <taxon>Bacteria</taxon>
        <taxon>Pseudomonadati</taxon>
        <taxon>Pseudomonadota</taxon>
        <taxon>Alphaproteobacteria</taxon>
        <taxon>Rickettsiales</taxon>
        <taxon>Rickettsiaceae</taxon>
        <taxon>Rickettsieae</taxon>
        <taxon>Rickettsia</taxon>
        <taxon>spotted fever group</taxon>
    </lineage>
</organism>
<proteinExistence type="inferred from homology"/>